<evidence type="ECO:0000255" key="1">
    <source>
        <dbReference type="HAMAP-Rule" id="MF_01341"/>
    </source>
</evidence>
<evidence type="ECO:0000256" key="2">
    <source>
        <dbReference type="SAM" id="MobiDB-lite"/>
    </source>
</evidence>
<evidence type="ECO:0000305" key="3"/>
<reference key="1">
    <citation type="journal article" date="2007" name="PLoS ONE">
        <title>Molecular correlates of host specialization in Staphylococcus aureus.</title>
        <authorList>
            <person name="Herron-Olson L."/>
            <person name="Fitzgerald J.R."/>
            <person name="Musser J.M."/>
            <person name="Kapur V."/>
        </authorList>
    </citation>
    <scope>NUCLEOTIDE SEQUENCE [LARGE SCALE GENOMIC DNA]</scope>
    <source>
        <strain>bovine RF122 / ET3-1</strain>
    </source>
</reference>
<sequence>MKLHELKPAEGSRKERNRVGRGVATGNGKTSGRGHKGQKARSGGGVRPGFEGGQLPLFRRLPKRGFTNINRKEYAIVNLDQLNKFEDGTEVTPALLVESGVVKNEKSGIKILGNGSLDKKLTVKAHKFSASAAEAIDAKGGAHEVI</sequence>
<feature type="chain" id="PRO_0000251566" description="Large ribosomal subunit protein uL15">
    <location>
        <begin position="1"/>
        <end position="146"/>
    </location>
</feature>
<feature type="region of interest" description="Disordered" evidence="2">
    <location>
        <begin position="1"/>
        <end position="54"/>
    </location>
</feature>
<feature type="compositionally biased region" description="Basic and acidic residues" evidence="2">
    <location>
        <begin position="1"/>
        <end position="18"/>
    </location>
</feature>
<feature type="compositionally biased region" description="Gly residues" evidence="2">
    <location>
        <begin position="42"/>
        <end position="52"/>
    </location>
</feature>
<protein>
    <recommendedName>
        <fullName evidence="1">Large ribosomal subunit protein uL15</fullName>
    </recommendedName>
    <alternativeName>
        <fullName evidence="3">50S ribosomal protein L15</fullName>
    </alternativeName>
</protein>
<proteinExistence type="evidence at protein level"/>
<dbReference type="EMBL" id="AJ938182">
    <property type="protein sequence ID" value="CAI81792.1"/>
    <property type="molecule type" value="Genomic_DNA"/>
</dbReference>
<dbReference type="RefSeq" id="WP_000766074.1">
    <property type="nucleotide sequence ID" value="NC_007622.1"/>
</dbReference>
<dbReference type="PDB" id="6FXC">
    <property type="method" value="EM"/>
    <property type="resolution" value="6.76 A"/>
    <property type="chains" value="AJ/BJ=1-146"/>
</dbReference>
<dbReference type="PDBsum" id="6FXC"/>
<dbReference type="EMDB" id="EMD-0243"/>
<dbReference type="EMDB" id="EMD-3637"/>
<dbReference type="SMR" id="Q2YYL6"/>
<dbReference type="GeneID" id="98346543"/>
<dbReference type="KEGG" id="sab:SAB2103c"/>
<dbReference type="HOGENOM" id="CLU_055188_4_2_9"/>
<dbReference type="GO" id="GO:0022625">
    <property type="term" value="C:cytosolic large ribosomal subunit"/>
    <property type="evidence" value="ECO:0007669"/>
    <property type="project" value="TreeGrafter"/>
</dbReference>
<dbReference type="GO" id="GO:0019843">
    <property type="term" value="F:rRNA binding"/>
    <property type="evidence" value="ECO:0007669"/>
    <property type="project" value="UniProtKB-UniRule"/>
</dbReference>
<dbReference type="GO" id="GO:0003735">
    <property type="term" value="F:structural constituent of ribosome"/>
    <property type="evidence" value="ECO:0007669"/>
    <property type="project" value="InterPro"/>
</dbReference>
<dbReference type="GO" id="GO:0006412">
    <property type="term" value="P:translation"/>
    <property type="evidence" value="ECO:0007669"/>
    <property type="project" value="UniProtKB-UniRule"/>
</dbReference>
<dbReference type="FunFam" id="3.100.10.10:FF:000004">
    <property type="entry name" value="50S ribosomal protein L15"/>
    <property type="match status" value="1"/>
</dbReference>
<dbReference type="Gene3D" id="3.100.10.10">
    <property type="match status" value="1"/>
</dbReference>
<dbReference type="HAMAP" id="MF_01341">
    <property type="entry name" value="Ribosomal_uL15"/>
    <property type="match status" value="1"/>
</dbReference>
<dbReference type="InterPro" id="IPR030878">
    <property type="entry name" value="Ribosomal_uL15"/>
</dbReference>
<dbReference type="InterPro" id="IPR021131">
    <property type="entry name" value="Ribosomal_uL15/eL18"/>
</dbReference>
<dbReference type="InterPro" id="IPR036227">
    <property type="entry name" value="Ribosomal_uL15/eL18_sf"/>
</dbReference>
<dbReference type="InterPro" id="IPR005749">
    <property type="entry name" value="Ribosomal_uL15_bac-type"/>
</dbReference>
<dbReference type="InterPro" id="IPR001196">
    <property type="entry name" value="Ribosomal_uL15_CS"/>
</dbReference>
<dbReference type="NCBIfam" id="TIGR01071">
    <property type="entry name" value="rplO_bact"/>
    <property type="match status" value="1"/>
</dbReference>
<dbReference type="PANTHER" id="PTHR12934">
    <property type="entry name" value="50S RIBOSOMAL PROTEIN L15"/>
    <property type="match status" value="1"/>
</dbReference>
<dbReference type="PANTHER" id="PTHR12934:SF11">
    <property type="entry name" value="LARGE RIBOSOMAL SUBUNIT PROTEIN UL15M"/>
    <property type="match status" value="1"/>
</dbReference>
<dbReference type="Pfam" id="PF00828">
    <property type="entry name" value="Ribosomal_L27A"/>
    <property type="match status" value="1"/>
</dbReference>
<dbReference type="SUPFAM" id="SSF52080">
    <property type="entry name" value="Ribosomal proteins L15p and L18e"/>
    <property type="match status" value="1"/>
</dbReference>
<dbReference type="PROSITE" id="PS00475">
    <property type="entry name" value="RIBOSOMAL_L15"/>
    <property type="match status" value="1"/>
</dbReference>
<organism>
    <name type="scientific">Staphylococcus aureus (strain bovine RF122 / ET3-1)</name>
    <dbReference type="NCBI Taxonomy" id="273036"/>
    <lineage>
        <taxon>Bacteria</taxon>
        <taxon>Bacillati</taxon>
        <taxon>Bacillota</taxon>
        <taxon>Bacilli</taxon>
        <taxon>Bacillales</taxon>
        <taxon>Staphylococcaceae</taxon>
        <taxon>Staphylococcus</taxon>
    </lineage>
</organism>
<keyword id="KW-0002">3D-structure</keyword>
<keyword id="KW-0687">Ribonucleoprotein</keyword>
<keyword id="KW-0689">Ribosomal protein</keyword>
<keyword id="KW-0694">RNA-binding</keyword>
<keyword id="KW-0699">rRNA-binding</keyword>
<name>RL15_STAAB</name>
<gene>
    <name evidence="1" type="primary">rplO</name>
    <name type="ordered locus">SAB2103c</name>
</gene>
<accession>Q2YYL6</accession>
<comment type="function">
    <text evidence="1">Binds to the 23S rRNA.</text>
</comment>
<comment type="subunit">
    <text evidence="1">Part of the 50S ribosomal subunit.</text>
</comment>
<comment type="similarity">
    <text evidence="1">Belongs to the universal ribosomal protein uL15 family.</text>
</comment>